<gene>
    <name type="primary">Ccdc85c</name>
</gene>
<organism>
    <name type="scientific">Mus musculus</name>
    <name type="common">Mouse</name>
    <dbReference type="NCBI Taxonomy" id="10090"/>
    <lineage>
        <taxon>Eukaryota</taxon>
        <taxon>Metazoa</taxon>
        <taxon>Chordata</taxon>
        <taxon>Craniata</taxon>
        <taxon>Vertebrata</taxon>
        <taxon>Euteleostomi</taxon>
        <taxon>Mammalia</taxon>
        <taxon>Eutheria</taxon>
        <taxon>Euarchontoglires</taxon>
        <taxon>Glires</taxon>
        <taxon>Rodentia</taxon>
        <taxon>Myomorpha</taxon>
        <taxon>Muroidea</taxon>
        <taxon>Muridae</taxon>
        <taxon>Murinae</taxon>
        <taxon>Mus</taxon>
        <taxon>Mus</taxon>
    </lineage>
</organism>
<proteinExistence type="evidence at protein level"/>
<dbReference type="EMBL" id="AC122407">
    <property type="status" value="NOT_ANNOTATED_CDS"/>
    <property type="molecule type" value="Genomic_DNA"/>
</dbReference>
<dbReference type="EMBL" id="AC152059">
    <property type="status" value="NOT_ANNOTATED_CDS"/>
    <property type="molecule type" value="Genomic_DNA"/>
</dbReference>
<dbReference type="CCDS" id="CCDS49166.1"/>
<dbReference type="RefSeq" id="NP_001153382.1">
    <property type="nucleotide sequence ID" value="NM_001159910.2"/>
</dbReference>
<dbReference type="SMR" id="E9Q6B2"/>
<dbReference type="BioGRID" id="579958">
    <property type="interactions" value="2"/>
</dbReference>
<dbReference type="FunCoup" id="E9Q6B2">
    <property type="interactions" value="46"/>
</dbReference>
<dbReference type="IntAct" id="E9Q6B2">
    <property type="interactions" value="1"/>
</dbReference>
<dbReference type="STRING" id="10090.ENSMUSP00000152421"/>
<dbReference type="iPTMnet" id="E9Q6B2"/>
<dbReference type="PhosphoSitePlus" id="E9Q6B2"/>
<dbReference type="PaxDb" id="10090-ENSMUSP00000125757"/>
<dbReference type="PeptideAtlas" id="E9Q6B2"/>
<dbReference type="ProteomicsDB" id="281492"/>
<dbReference type="Pumba" id="E9Q6B2"/>
<dbReference type="Antibodypedia" id="54727">
    <property type="antibodies" value="73 antibodies from 14 providers"/>
</dbReference>
<dbReference type="Ensembl" id="ENSMUST00000222310.2">
    <property type="protein sequence ID" value="ENSMUSP00000152421.2"/>
    <property type="gene ID" value="ENSMUSG00000084883.3"/>
</dbReference>
<dbReference type="GeneID" id="668158"/>
<dbReference type="KEGG" id="mmu:668158"/>
<dbReference type="UCSC" id="uc011yrs.1">
    <property type="organism name" value="mouse"/>
</dbReference>
<dbReference type="AGR" id="MGI:3644008"/>
<dbReference type="CTD" id="317762"/>
<dbReference type="MGI" id="MGI:3644008">
    <property type="gene designation" value="Ccdc85c"/>
</dbReference>
<dbReference type="VEuPathDB" id="HostDB:ENSMUSG00000084883"/>
<dbReference type="eggNOG" id="KOG3819">
    <property type="taxonomic scope" value="Eukaryota"/>
</dbReference>
<dbReference type="GeneTree" id="ENSGT00940000159071"/>
<dbReference type="HOGENOM" id="CLU_028762_0_0_1"/>
<dbReference type="InParanoid" id="E9Q6B2"/>
<dbReference type="OMA" id="TDNEKMN"/>
<dbReference type="OrthoDB" id="10056395at2759"/>
<dbReference type="PhylomeDB" id="E9Q6B2"/>
<dbReference type="TreeFam" id="TF320243"/>
<dbReference type="BioGRID-ORCS" id="668158">
    <property type="hits" value="1 hit in 76 CRISPR screens"/>
</dbReference>
<dbReference type="ChiTaRS" id="Ccdc85c">
    <property type="organism name" value="mouse"/>
</dbReference>
<dbReference type="PRO" id="PR:E9Q6B2"/>
<dbReference type="Proteomes" id="UP000000589">
    <property type="component" value="Chromosome 12"/>
</dbReference>
<dbReference type="RNAct" id="E9Q6B2">
    <property type="molecule type" value="protein"/>
</dbReference>
<dbReference type="Bgee" id="ENSMUSG00000084883">
    <property type="expression patterns" value="Expressed in retinal neural layer and 96 other cell types or tissues"/>
</dbReference>
<dbReference type="ExpressionAtlas" id="E9Q6B2">
    <property type="expression patterns" value="baseline and differential"/>
</dbReference>
<dbReference type="GO" id="GO:0005912">
    <property type="term" value="C:adherens junction"/>
    <property type="evidence" value="ECO:0007669"/>
    <property type="project" value="UniProtKB-SubCell"/>
</dbReference>
<dbReference type="GO" id="GO:0043296">
    <property type="term" value="C:apical junction complex"/>
    <property type="evidence" value="ECO:0000314"/>
    <property type="project" value="UniProtKB"/>
</dbReference>
<dbReference type="GO" id="GO:0005923">
    <property type="term" value="C:bicellular tight junction"/>
    <property type="evidence" value="ECO:0007669"/>
    <property type="project" value="UniProtKB-SubCell"/>
</dbReference>
<dbReference type="GO" id="GO:0016607">
    <property type="term" value="C:nuclear speck"/>
    <property type="evidence" value="ECO:0007669"/>
    <property type="project" value="Ensembl"/>
</dbReference>
<dbReference type="GO" id="GO:0008283">
    <property type="term" value="P:cell population proliferation"/>
    <property type="evidence" value="ECO:0000315"/>
    <property type="project" value="MGI"/>
</dbReference>
<dbReference type="GO" id="GO:0021987">
    <property type="term" value="P:cerebral cortex development"/>
    <property type="evidence" value="ECO:0000315"/>
    <property type="project" value="UniProtKB"/>
</dbReference>
<dbReference type="GO" id="GO:0030010">
    <property type="term" value="P:establishment of cell polarity"/>
    <property type="evidence" value="ECO:0000315"/>
    <property type="project" value="MGI"/>
</dbReference>
<dbReference type="GO" id="GO:0045184">
    <property type="term" value="P:establishment of protein localization"/>
    <property type="evidence" value="ECO:0000315"/>
    <property type="project" value="MGI"/>
</dbReference>
<dbReference type="GO" id="GO:0007219">
    <property type="term" value="P:Notch signaling pathway"/>
    <property type="evidence" value="ECO:0000315"/>
    <property type="project" value="MGI"/>
</dbReference>
<dbReference type="GO" id="GO:0060019">
    <property type="term" value="P:radial glial cell differentiation"/>
    <property type="evidence" value="ECO:0000315"/>
    <property type="project" value="MGI"/>
</dbReference>
<dbReference type="InterPro" id="IPR019359">
    <property type="entry name" value="CCDC85"/>
</dbReference>
<dbReference type="PANTHER" id="PTHR13546:SF14">
    <property type="entry name" value="COILED-COIL DOMAIN-CONTAINING PROTEIN 85C"/>
    <property type="match status" value="1"/>
</dbReference>
<dbReference type="PANTHER" id="PTHR13546">
    <property type="entry name" value="RE60986P"/>
    <property type="match status" value="1"/>
</dbReference>
<dbReference type="Pfam" id="PF10226">
    <property type="entry name" value="CCDC85"/>
    <property type="match status" value="1"/>
</dbReference>
<keyword id="KW-0007">Acetylation</keyword>
<keyword id="KW-0965">Cell junction</keyword>
<keyword id="KW-0175">Coiled coil</keyword>
<keyword id="KW-0217">Developmental protein</keyword>
<keyword id="KW-0597">Phosphoprotein</keyword>
<keyword id="KW-1185">Reference proteome</keyword>
<keyword id="KW-0796">Tight junction</keyword>
<sequence>MAKPPAVAAAAAAAASEELSQVPDEELLRWSKEELARRLRRAEGEKVGLMLEHGGLMRDVNRRLQQHLLEIRGLKDVNQRLQDDNQELRELCCFLDDDRQKGRKLAREWQRFGRHAAGAVWHEVARSQQKLRELEARQEALLRENLELKELVLLLDEERAALAAAGGAGGGGGGAGSRSSIDSQASLSGPLAGSAAGSGARDVGDGSSTSSAGSGGSPDHHHHVPAALLPPGPHKVPDGKAGATRRSLDDLSAPPHHRSIPNGLHDPSSTYIRPLETKVKLLDGDKLPPQQAGSGEFRTLRKGFSPYHSESQLASLPPSYQEVLQNGPACPVPELPSPPSTVYSSAGQKPEAVVHAMKVLEVHENLDRQLQDSCEEDLSEKEKAIVREMCNVVWRKLGDAASTKPSIRQHLSGNQFKGPL</sequence>
<evidence type="ECO:0000250" key="1">
    <source>
        <dbReference type="UniProtKB" id="A6NKD9"/>
    </source>
</evidence>
<evidence type="ECO:0000255" key="2"/>
<evidence type="ECO:0000256" key="3">
    <source>
        <dbReference type="SAM" id="MobiDB-lite"/>
    </source>
</evidence>
<evidence type="ECO:0000269" key="4">
    <source>
    </source>
</evidence>
<evidence type="ECO:0000305" key="5"/>
<feature type="initiator methionine" description="Removed" evidence="1">
    <location>
        <position position="1"/>
    </location>
</feature>
<feature type="chain" id="PRO_0000415925" description="Coiled-coil domain-containing protein 85C">
    <location>
        <begin position="2"/>
        <end position="420"/>
    </location>
</feature>
<feature type="region of interest" description="Disordered" evidence="3">
    <location>
        <begin position="165"/>
        <end position="271"/>
    </location>
</feature>
<feature type="coiled-coil region" evidence="2">
    <location>
        <begin position="26"/>
        <end position="92"/>
    </location>
</feature>
<feature type="coiled-coil region" evidence="2">
    <location>
        <begin position="122"/>
        <end position="165"/>
    </location>
</feature>
<feature type="compositionally biased region" description="Gly residues" evidence="3">
    <location>
        <begin position="166"/>
        <end position="176"/>
    </location>
</feature>
<feature type="compositionally biased region" description="Low complexity" evidence="3">
    <location>
        <begin position="185"/>
        <end position="212"/>
    </location>
</feature>
<feature type="modified residue" description="N-acetylalanine" evidence="1">
    <location>
        <position position="2"/>
    </location>
</feature>
<feature type="modified residue" description="Phosphoserine" evidence="1">
    <location>
        <position position="179"/>
    </location>
</feature>
<feature type="modified residue" description="Phosphoserine" evidence="1">
    <location>
        <position position="247"/>
    </location>
</feature>
<accession>E9Q6B2</accession>
<reference key="1">
    <citation type="journal article" date="2009" name="PLoS Biol.">
        <title>Lineage-specific biology revealed by a finished genome assembly of the mouse.</title>
        <authorList>
            <person name="Church D.M."/>
            <person name="Goodstadt L."/>
            <person name="Hillier L.W."/>
            <person name="Zody M.C."/>
            <person name="Goldstein S."/>
            <person name="She X."/>
            <person name="Bult C.J."/>
            <person name="Agarwala R."/>
            <person name="Cherry J.L."/>
            <person name="DiCuccio M."/>
            <person name="Hlavina W."/>
            <person name="Kapustin Y."/>
            <person name="Meric P."/>
            <person name="Maglott D."/>
            <person name="Birtle Z."/>
            <person name="Marques A.C."/>
            <person name="Graves T."/>
            <person name="Zhou S."/>
            <person name="Teague B."/>
            <person name="Potamousis K."/>
            <person name="Churas C."/>
            <person name="Place M."/>
            <person name="Herschleb J."/>
            <person name="Runnheim R."/>
            <person name="Forrest D."/>
            <person name="Amos-Landgraf J."/>
            <person name="Schwartz D.C."/>
            <person name="Cheng Z."/>
            <person name="Lindblad-Toh K."/>
            <person name="Eichler E.E."/>
            <person name="Ponting C.P."/>
        </authorList>
    </citation>
    <scope>NUCLEOTIDE SEQUENCE [LARGE SCALE GENOMIC DNA]</scope>
    <source>
        <strain>C57BL/6J</strain>
    </source>
</reference>
<reference key="2">
    <citation type="journal article" date="2010" name="Cell">
        <title>A tissue-specific atlas of mouse protein phosphorylation and expression.</title>
        <authorList>
            <person name="Huttlin E.L."/>
            <person name="Jedrychowski M.P."/>
            <person name="Elias J.E."/>
            <person name="Goswami T."/>
            <person name="Rad R."/>
            <person name="Beausoleil S.A."/>
            <person name="Villen J."/>
            <person name="Haas W."/>
            <person name="Sowa M.E."/>
            <person name="Gygi S.P."/>
        </authorList>
    </citation>
    <scope>IDENTIFICATION BY MASS SPECTROMETRY [LARGE SCALE ANALYSIS]</scope>
    <source>
        <tissue>Kidney</tissue>
        <tissue>Pancreas</tissue>
    </source>
</reference>
<reference key="3">
    <citation type="journal article" date="2012" name="Am. J. Pathol.">
        <title>Ccdc85c encoding a protein at apical junctions of radial glia is disrupted in hemorrhagic hydrocephalus (hhy) mice.</title>
        <authorList>
            <person name="Mori N."/>
            <person name="Kuwamura M."/>
            <person name="Tanaka N."/>
            <person name="Hirano R."/>
            <person name="Nabe M."/>
            <person name="Ibuki M."/>
            <person name="Yamate J."/>
        </authorList>
    </citation>
    <scope>FUNCTION</scope>
    <scope>TISSUE SPECIFICITY</scope>
    <scope>SUBCELLULAR LOCATION</scope>
    <scope>DISRUPTION PHENOTYPE</scope>
</reference>
<protein>
    <recommendedName>
        <fullName>Coiled-coil domain-containing protein 85C</fullName>
    </recommendedName>
</protein>
<comment type="function">
    <text evidence="1 4">May play a role in cell-cell adhesion and epithelium development through its interaction with proteins of the beta-catenin family (By similarity). May play an important role in cortical development, especially in the maintenance of radial glia (PubMed:22056358).</text>
</comment>
<comment type="subunit">
    <text evidence="1">May interact with ARVCF, CTNND1, CTNND2 and PKP4.</text>
</comment>
<comment type="subcellular location">
    <subcellularLocation>
        <location evidence="4">Cell junction</location>
        <location evidence="4">Tight junction</location>
    </subcellularLocation>
    <subcellularLocation>
        <location evidence="1">Cell junction</location>
        <location evidence="1">Adherens junction</location>
    </subcellularLocation>
    <text evidence="4">Localizes to the apical junction of radial glia in the wall of lateral ventricles of the developing brain. Colocalizes with TJP1 on the meshwork-like structure of adherens junctions on the lateral ventricles wall.</text>
</comment>
<comment type="tissue specificity">
    <text evidence="4">Predominantly expressed on the surface of the lateral ventricular walls of the developing cerebral cortex.</text>
</comment>
<comment type="disruption phenotype">
    <text evidence="4">Disrupted in the hemorrhagic hydrocephalus (hhy) mutant. The mutant animals shown sucortical heterotopia and non-obstructive hydrocephalus with frequent brain hemorrhage.</text>
</comment>
<comment type="similarity">
    <text evidence="5">Belongs to the CCDC85 family.</text>
</comment>
<name>CC85C_MOUSE</name>